<feature type="chain" id="PRO_1000024938" description="D-alanyl carrier protein">
    <location>
        <begin position="1"/>
        <end position="79"/>
    </location>
</feature>
<feature type="domain" description="Carrier" evidence="1">
    <location>
        <begin position="1"/>
        <end position="77"/>
    </location>
</feature>
<feature type="modified residue" description="O-(pantetheine 4'-phosphoryl)serine" evidence="1 3">
    <location>
        <position position="35"/>
    </location>
</feature>
<feature type="mutagenesis site" description="Does not affect binding to DltC." evidence="2">
    <original>S</original>
    <variation>A</variation>
    <location>
        <position position="35"/>
    </location>
</feature>
<feature type="mutagenesis site" description="Reduced binding to DltB." evidence="2">
    <original>V</original>
    <variation>D</variation>
    <variation>R</variation>
    <location>
        <position position="39"/>
    </location>
</feature>
<feature type="helix" evidence="4">
    <location>
        <begin position="3"/>
        <end position="14"/>
    </location>
</feature>
<feature type="strand" evidence="4">
    <location>
        <begin position="20"/>
        <end position="22"/>
    </location>
</feature>
<feature type="turn" evidence="4">
    <location>
        <begin position="27"/>
        <end position="31"/>
    </location>
</feature>
<feature type="helix" evidence="4">
    <location>
        <begin position="37"/>
        <end position="49"/>
    </location>
</feature>
<feature type="strand" evidence="4">
    <location>
        <begin position="55"/>
        <end position="57"/>
    </location>
</feature>
<feature type="turn" evidence="4">
    <location>
        <begin position="60"/>
        <end position="62"/>
    </location>
</feature>
<feature type="helix" evidence="4">
    <location>
        <begin position="66"/>
        <end position="78"/>
    </location>
</feature>
<protein>
    <recommendedName>
        <fullName evidence="1">D-alanyl carrier protein</fullName>
        <shortName evidence="1">DCP</shortName>
    </recommendedName>
    <alternativeName>
        <fullName evidence="1">D-alanine--poly(phosphoribitol) ligase subunit 2</fullName>
    </alternativeName>
</protein>
<comment type="function">
    <text evidence="1">Carrier protein involved in the D-alanylation of lipoteichoic acid (LTA). The loading of thioester-linked D-alanine onto DltC is catalyzed by D-alanine--D-alanyl carrier protein ligase DltA. The DltC-carried D-alanyl group is further transferred to cell membrane phosphatidylglycerol (PG) by forming an ester bond, probably catalyzed by DltD. D-alanylation of LTA plays an important role in modulating the properties of the cell wall in Gram-positive bacteria, influencing the net charge of the cell wall.</text>
</comment>
<comment type="pathway">
    <text evidence="1">Cell wall biogenesis; lipoteichoic acid biosynthesis.</text>
</comment>
<comment type="subcellular location">
    <subcellularLocation>
        <location evidence="1">Cytoplasm</location>
    </subcellularLocation>
</comment>
<comment type="PTM">
    <text evidence="1 3">4'-phosphopantetheine is transferred from CoA to a specific serine of apo-DCP.</text>
</comment>
<comment type="similarity">
    <text evidence="1">Belongs to the DltC family.</text>
</comment>
<reference key="1">
    <citation type="journal article" date="2004" name="Nat. Biotechnol.">
        <title>Complete sequence and comparative genome analysis of the dairy bacterium Streptococcus thermophilus.</title>
        <authorList>
            <person name="Bolotin A."/>
            <person name="Quinquis B."/>
            <person name="Renault P."/>
            <person name="Sorokin A."/>
            <person name="Ehrlich S.D."/>
            <person name="Kulakauskas S."/>
            <person name="Lapidus A."/>
            <person name="Goltsman E."/>
            <person name="Mazur M."/>
            <person name="Pusch G.D."/>
            <person name="Fonstein M."/>
            <person name="Overbeek R."/>
            <person name="Kyprides N."/>
            <person name="Purnelle B."/>
            <person name="Prozzi D."/>
            <person name="Ngui K."/>
            <person name="Masuy D."/>
            <person name="Hancy F."/>
            <person name="Burteau S."/>
            <person name="Boutry M."/>
            <person name="Delcour J."/>
            <person name="Goffeau A."/>
            <person name="Hols P."/>
        </authorList>
    </citation>
    <scope>NUCLEOTIDE SEQUENCE [LARGE SCALE GENOMIC DNA]</scope>
    <source>
        <strain>ATCC BAA-250 / LMG 18311</strain>
    </source>
</reference>
<reference key="2">
    <citation type="journal article" date="2018" name="Nature">
        <title>Crystal structure of a membrane-bound O-acyltransferase.</title>
        <authorList>
            <person name="Ma D."/>
            <person name="Wang Z."/>
            <person name="Merrikh C.N."/>
            <person name="Lang K.S."/>
            <person name="Lu P."/>
            <person name="Li X."/>
            <person name="Merrikh H."/>
            <person name="Rao Z."/>
            <person name="Xu W."/>
        </authorList>
    </citation>
    <scope>X-RAY CRYSTALLOGRAPHY (3.15 ANGSTROMS) IN COMPLEX WITH DLTB</scope>
    <scope>PHOSPHOPANTETHEINYLATION AT SER-35</scope>
    <scope>MUTAGENESIS OF SER-35 AND VAL-39</scope>
</reference>
<keyword id="KW-0002">3D-structure</keyword>
<keyword id="KW-0961">Cell wall biogenesis/degradation</keyword>
<keyword id="KW-0963">Cytoplasm</keyword>
<keyword id="KW-0596">Phosphopantetheine</keyword>
<keyword id="KW-0597">Phosphoprotein</keyword>
<keyword id="KW-1185">Reference proteome</keyword>
<sequence>MDVKAEVIEIIDELFMEDVSDMMDEDLFDAGVLDSMGTVELIVELESRFDIRVPVSEFGRDDWNTANKIVEGVTELRNA</sequence>
<proteinExistence type="evidence at protein level"/>
<gene>
    <name evidence="1" type="primary">dltC</name>
    <name type="ordered locus">stu0763</name>
</gene>
<dbReference type="EMBL" id="CP000023">
    <property type="protein sequence ID" value="AAV60454.1"/>
    <property type="molecule type" value="Genomic_DNA"/>
</dbReference>
<dbReference type="RefSeq" id="WP_002950439.1">
    <property type="nucleotide sequence ID" value="NC_006448.1"/>
</dbReference>
<dbReference type="PDB" id="6BUG">
    <property type="method" value="X-ray"/>
    <property type="resolution" value="3.27 A"/>
    <property type="chains" value="A/B/E=1-79"/>
</dbReference>
<dbReference type="PDB" id="6BUH">
    <property type="method" value="X-ray"/>
    <property type="resolution" value="3.15 A"/>
    <property type="chains" value="A/B/E/G=1-79"/>
</dbReference>
<dbReference type="PDB" id="8JF2">
    <property type="method" value="EM"/>
    <property type="resolution" value="3.50 A"/>
    <property type="chains" value="F/G/H/I=1-79"/>
</dbReference>
<dbReference type="PDBsum" id="6BUG"/>
<dbReference type="PDBsum" id="6BUH"/>
<dbReference type="PDBsum" id="8JF2"/>
<dbReference type="EMDB" id="EMD-36207"/>
<dbReference type="SMR" id="Q5M4V3"/>
<dbReference type="STRING" id="264199.stu0763"/>
<dbReference type="GeneID" id="66898661"/>
<dbReference type="KEGG" id="stl:stu0763"/>
<dbReference type="eggNOG" id="COG0236">
    <property type="taxonomic scope" value="Bacteria"/>
</dbReference>
<dbReference type="HOGENOM" id="CLU_108696_19_0_9"/>
<dbReference type="UniPathway" id="UPA00556"/>
<dbReference type="Proteomes" id="UP000001170">
    <property type="component" value="Chromosome"/>
</dbReference>
<dbReference type="GO" id="GO:0005737">
    <property type="term" value="C:cytoplasm"/>
    <property type="evidence" value="ECO:0007669"/>
    <property type="project" value="UniProtKB-SubCell"/>
</dbReference>
<dbReference type="GO" id="GO:0036370">
    <property type="term" value="F:D-alanyl carrier activity"/>
    <property type="evidence" value="ECO:0007669"/>
    <property type="project" value="UniProtKB-UniRule"/>
</dbReference>
<dbReference type="GO" id="GO:0071555">
    <property type="term" value="P:cell wall organization"/>
    <property type="evidence" value="ECO:0007669"/>
    <property type="project" value="UniProtKB-KW"/>
</dbReference>
<dbReference type="GO" id="GO:0070395">
    <property type="term" value="P:lipoteichoic acid biosynthetic process"/>
    <property type="evidence" value="ECO:0007669"/>
    <property type="project" value="UniProtKB-UniRule"/>
</dbReference>
<dbReference type="Gene3D" id="1.10.1200.10">
    <property type="entry name" value="ACP-like"/>
    <property type="match status" value="1"/>
</dbReference>
<dbReference type="HAMAP" id="MF_00565">
    <property type="entry name" value="DltC"/>
    <property type="match status" value="1"/>
</dbReference>
<dbReference type="InterPro" id="IPR036736">
    <property type="entry name" value="ACP-like_sf"/>
</dbReference>
<dbReference type="InterPro" id="IPR003230">
    <property type="entry name" value="DltC"/>
</dbReference>
<dbReference type="InterPro" id="IPR009081">
    <property type="entry name" value="PP-bd_ACP"/>
</dbReference>
<dbReference type="NCBIfam" id="TIGR01688">
    <property type="entry name" value="dltC"/>
    <property type="match status" value="1"/>
</dbReference>
<dbReference type="NCBIfam" id="NF003464">
    <property type="entry name" value="PRK05087.1"/>
    <property type="match status" value="1"/>
</dbReference>
<dbReference type="Pfam" id="PF00550">
    <property type="entry name" value="PP-binding"/>
    <property type="match status" value="1"/>
</dbReference>
<dbReference type="SUPFAM" id="SSF47336">
    <property type="entry name" value="ACP-like"/>
    <property type="match status" value="1"/>
</dbReference>
<dbReference type="PROSITE" id="PS50075">
    <property type="entry name" value="CARRIER"/>
    <property type="match status" value="1"/>
</dbReference>
<evidence type="ECO:0000255" key="1">
    <source>
        <dbReference type="HAMAP-Rule" id="MF_00565"/>
    </source>
</evidence>
<evidence type="ECO:0000269" key="2">
    <source>
    </source>
</evidence>
<evidence type="ECO:0000305" key="3">
    <source>
    </source>
</evidence>
<evidence type="ECO:0007829" key="4">
    <source>
        <dbReference type="PDB" id="6BUH"/>
    </source>
</evidence>
<accession>Q5M4V3</accession>
<name>DLTC_STRT2</name>
<organism>
    <name type="scientific">Streptococcus thermophilus (strain ATCC BAA-250 / LMG 18311)</name>
    <dbReference type="NCBI Taxonomy" id="264199"/>
    <lineage>
        <taxon>Bacteria</taxon>
        <taxon>Bacillati</taxon>
        <taxon>Bacillota</taxon>
        <taxon>Bacilli</taxon>
        <taxon>Lactobacillales</taxon>
        <taxon>Streptococcaceae</taxon>
        <taxon>Streptococcus</taxon>
    </lineage>
</organism>